<feature type="chain" id="PRO_0000085795" description="Cyclin-dependent kinase 7">
    <location>
        <begin position="1"/>
        <end position="352"/>
    </location>
</feature>
<feature type="domain" description="Protein kinase" evidence="3">
    <location>
        <begin position="18"/>
        <end position="301"/>
    </location>
</feature>
<feature type="active site" description="Proton acceptor" evidence="3 4">
    <location>
        <position position="143"/>
    </location>
</feature>
<feature type="binding site" evidence="3">
    <location>
        <begin position="24"/>
        <end position="32"/>
    </location>
    <ligand>
        <name>ATP</name>
        <dbReference type="ChEBI" id="CHEBI:30616"/>
    </ligand>
</feature>
<feature type="binding site" evidence="3">
    <location>
        <position position="47"/>
    </location>
    <ligand>
        <name>ATP</name>
        <dbReference type="ChEBI" id="CHEBI:30616"/>
    </ligand>
</feature>
<feature type="modified residue" description="Phosphoserine; by CDK1 and CDK2" evidence="5">
    <location>
        <position position="170"/>
    </location>
</feature>
<feature type="modified residue" description="Phosphothreonine; by CDK2" evidence="5">
    <location>
        <position position="176"/>
    </location>
</feature>
<gene>
    <name type="primary">cdk7</name>
    <name type="synonym">mo15</name>
</gene>
<dbReference type="EC" id="2.7.11.22"/>
<dbReference type="EC" id="2.7.11.23"/>
<dbReference type="EMBL" id="X53962">
    <property type="protein sequence ID" value="CAA37915.1"/>
    <property type="molecule type" value="mRNA"/>
</dbReference>
<dbReference type="EMBL" id="BC130134">
    <property type="protein sequence ID" value="AAI30135.1"/>
    <property type="molecule type" value="mRNA"/>
</dbReference>
<dbReference type="PIR" id="S12091">
    <property type="entry name" value="S12091"/>
</dbReference>
<dbReference type="RefSeq" id="NP_001084361.1">
    <property type="nucleotide sequence ID" value="NM_001090892.1"/>
</dbReference>
<dbReference type="SMR" id="P20911"/>
<dbReference type="BioGRID" id="100785">
    <property type="interactions" value="3"/>
</dbReference>
<dbReference type="iPTMnet" id="P20911"/>
<dbReference type="DNASU" id="399461"/>
<dbReference type="GeneID" id="399461"/>
<dbReference type="KEGG" id="xla:399461"/>
<dbReference type="AGR" id="Xenbase:XB-GENE-485511"/>
<dbReference type="CTD" id="399461"/>
<dbReference type="Xenbase" id="XB-GENE-485511">
    <property type="gene designation" value="cdk7.L"/>
</dbReference>
<dbReference type="OrthoDB" id="1732493at2759"/>
<dbReference type="BRENDA" id="2.7.11.22">
    <property type="organism ID" value="6725"/>
</dbReference>
<dbReference type="Proteomes" id="UP000186698">
    <property type="component" value="Chromosome 1L"/>
</dbReference>
<dbReference type="Bgee" id="399461">
    <property type="expression patterns" value="Expressed in oocyte and 19 other cell types or tissues"/>
</dbReference>
<dbReference type="GO" id="GO:0005737">
    <property type="term" value="C:cytoplasm"/>
    <property type="evidence" value="ECO:0000318"/>
    <property type="project" value="GO_Central"/>
</dbReference>
<dbReference type="GO" id="GO:0005634">
    <property type="term" value="C:nucleus"/>
    <property type="evidence" value="ECO:0000318"/>
    <property type="project" value="GO_Central"/>
</dbReference>
<dbReference type="GO" id="GO:0070985">
    <property type="term" value="C:transcription factor TFIIK complex"/>
    <property type="evidence" value="ECO:0000318"/>
    <property type="project" value="GO_Central"/>
</dbReference>
<dbReference type="GO" id="GO:0005524">
    <property type="term" value="F:ATP binding"/>
    <property type="evidence" value="ECO:0007669"/>
    <property type="project" value="UniProtKB-KW"/>
</dbReference>
<dbReference type="GO" id="GO:0004693">
    <property type="term" value="F:cyclin-dependent protein serine/threonine kinase activity"/>
    <property type="evidence" value="ECO:0000318"/>
    <property type="project" value="GO_Central"/>
</dbReference>
<dbReference type="GO" id="GO:0106310">
    <property type="term" value="F:protein serine kinase activity"/>
    <property type="evidence" value="ECO:0007669"/>
    <property type="project" value="RHEA"/>
</dbReference>
<dbReference type="GO" id="GO:0008353">
    <property type="term" value="F:RNA polymerase II CTD heptapeptide repeat kinase activity"/>
    <property type="evidence" value="ECO:0000318"/>
    <property type="project" value="GO_Central"/>
</dbReference>
<dbReference type="GO" id="GO:0140836">
    <property type="term" value="F:RNA polymerase II CTD heptapeptide repeat S5 kinase activity"/>
    <property type="evidence" value="ECO:0000250"/>
    <property type="project" value="UniProtKB"/>
</dbReference>
<dbReference type="GO" id="GO:0051301">
    <property type="term" value="P:cell division"/>
    <property type="evidence" value="ECO:0007669"/>
    <property type="project" value="UniProtKB-KW"/>
</dbReference>
<dbReference type="GO" id="GO:0051321">
    <property type="term" value="P:meiotic cell cycle"/>
    <property type="evidence" value="ECO:0007669"/>
    <property type="project" value="UniProtKB-KW"/>
</dbReference>
<dbReference type="GO" id="GO:0045944">
    <property type="term" value="P:positive regulation of transcription by RNA polymerase II"/>
    <property type="evidence" value="ECO:0000318"/>
    <property type="project" value="GO_Central"/>
</dbReference>
<dbReference type="GO" id="GO:0051726">
    <property type="term" value="P:regulation of cell cycle"/>
    <property type="evidence" value="ECO:0000318"/>
    <property type="project" value="GO_Central"/>
</dbReference>
<dbReference type="GO" id="GO:0006367">
    <property type="term" value="P:transcription initiation at RNA polymerase II promoter"/>
    <property type="evidence" value="ECO:0000250"/>
    <property type="project" value="UniProtKB"/>
</dbReference>
<dbReference type="CDD" id="cd07841">
    <property type="entry name" value="STKc_CDK7"/>
    <property type="match status" value="1"/>
</dbReference>
<dbReference type="FunFam" id="1.10.510.10:FF:000097">
    <property type="entry name" value="Putative cyclin-dependent kinase 7"/>
    <property type="match status" value="1"/>
</dbReference>
<dbReference type="FunFam" id="3.30.200.20:FF:000190">
    <property type="entry name" value="Putative cyclin-dependent kinase 7"/>
    <property type="match status" value="1"/>
</dbReference>
<dbReference type="Gene3D" id="3.30.200.20">
    <property type="entry name" value="Phosphorylase Kinase, domain 1"/>
    <property type="match status" value="1"/>
</dbReference>
<dbReference type="Gene3D" id="1.10.510.10">
    <property type="entry name" value="Transferase(Phosphotransferase) domain 1"/>
    <property type="match status" value="1"/>
</dbReference>
<dbReference type="InterPro" id="IPR050108">
    <property type="entry name" value="CDK"/>
</dbReference>
<dbReference type="InterPro" id="IPR037770">
    <property type="entry name" value="CDK7"/>
</dbReference>
<dbReference type="InterPro" id="IPR011009">
    <property type="entry name" value="Kinase-like_dom_sf"/>
</dbReference>
<dbReference type="InterPro" id="IPR000719">
    <property type="entry name" value="Prot_kinase_dom"/>
</dbReference>
<dbReference type="InterPro" id="IPR017441">
    <property type="entry name" value="Protein_kinase_ATP_BS"/>
</dbReference>
<dbReference type="InterPro" id="IPR008271">
    <property type="entry name" value="Ser/Thr_kinase_AS"/>
</dbReference>
<dbReference type="PANTHER" id="PTHR24056">
    <property type="entry name" value="CELL DIVISION PROTEIN KINASE"/>
    <property type="match status" value="1"/>
</dbReference>
<dbReference type="PANTHER" id="PTHR24056:SF0">
    <property type="entry name" value="CYCLIN-DEPENDENT KINASE 7"/>
    <property type="match status" value="1"/>
</dbReference>
<dbReference type="Pfam" id="PF00069">
    <property type="entry name" value="Pkinase"/>
    <property type="match status" value="1"/>
</dbReference>
<dbReference type="SMART" id="SM00220">
    <property type="entry name" value="S_TKc"/>
    <property type="match status" value="1"/>
</dbReference>
<dbReference type="SUPFAM" id="SSF56112">
    <property type="entry name" value="Protein kinase-like (PK-like)"/>
    <property type="match status" value="1"/>
</dbReference>
<dbReference type="PROSITE" id="PS00107">
    <property type="entry name" value="PROTEIN_KINASE_ATP"/>
    <property type="match status" value="1"/>
</dbReference>
<dbReference type="PROSITE" id="PS50011">
    <property type="entry name" value="PROTEIN_KINASE_DOM"/>
    <property type="match status" value="1"/>
</dbReference>
<dbReference type="PROSITE" id="PS00108">
    <property type="entry name" value="PROTEIN_KINASE_ST"/>
    <property type="match status" value="1"/>
</dbReference>
<comment type="function">
    <text evidence="2">Serine/threonine kinase involved in cell cycle control and in RNA polymerase II-mediated RNA transcription. Cyclin-dependent kinases (CDKs) are activated by the binding to a cyclin and mediate the progression through the cell cycle. Each different complex controls a specific transition between 2 subsequent phases in the cell cycle. Required for both activation and complex formation of cdk1/cyclin-B during G2-M transition, and for activation of cdk2/cyclins during G1-S transition (but not complex formation). cdk7 is the catalytic subunit of the CDK-activating kinase (CAK) complex. CAK activates the cyclin-associated kinases cdk1, cdk2, cdk4 and cdk6 by threonine phosphorylation, thus regulating cell cycle progression. Initiates transcription by RNA polymerase II by mediating phosphorylation of polr2a at 'Ser-5' of the repetitive C-terminal domain (CTD) when polr2a is in complex with DNA, promoting dissociation from DNA and initiation. CAK complexed to the core-TFIIH basal transcription factor activates RNA polymerase II by serine phosphorylation of the CTD of polr2a, allowing its escape from the promoter and elongation of the transcripts.</text>
</comment>
<comment type="catalytic activity">
    <reaction evidence="2">
        <text>L-seryl-[protein] + ATP = O-phospho-L-seryl-[protein] + ADP + H(+)</text>
        <dbReference type="Rhea" id="RHEA:17989"/>
        <dbReference type="Rhea" id="RHEA-COMP:9863"/>
        <dbReference type="Rhea" id="RHEA-COMP:11604"/>
        <dbReference type="ChEBI" id="CHEBI:15378"/>
        <dbReference type="ChEBI" id="CHEBI:29999"/>
        <dbReference type="ChEBI" id="CHEBI:30616"/>
        <dbReference type="ChEBI" id="CHEBI:83421"/>
        <dbReference type="ChEBI" id="CHEBI:456216"/>
        <dbReference type="EC" id="2.7.11.22"/>
    </reaction>
</comment>
<comment type="catalytic activity">
    <reaction evidence="2">
        <text>L-threonyl-[protein] + ATP = O-phospho-L-threonyl-[protein] + ADP + H(+)</text>
        <dbReference type="Rhea" id="RHEA:46608"/>
        <dbReference type="Rhea" id="RHEA-COMP:11060"/>
        <dbReference type="Rhea" id="RHEA-COMP:11605"/>
        <dbReference type="ChEBI" id="CHEBI:15378"/>
        <dbReference type="ChEBI" id="CHEBI:30013"/>
        <dbReference type="ChEBI" id="CHEBI:30616"/>
        <dbReference type="ChEBI" id="CHEBI:61977"/>
        <dbReference type="ChEBI" id="CHEBI:456216"/>
        <dbReference type="EC" id="2.7.11.22"/>
    </reaction>
</comment>
<comment type="catalytic activity">
    <reaction evidence="2">
        <text>[DNA-directed RNA polymerase] + ATP = phospho-[DNA-directed RNA polymerase] + ADP + H(+)</text>
        <dbReference type="Rhea" id="RHEA:10216"/>
        <dbReference type="Rhea" id="RHEA-COMP:11321"/>
        <dbReference type="Rhea" id="RHEA-COMP:11322"/>
        <dbReference type="ChEBI" id="CHEBI:15378"/>
        <dbReference type="ChEBI" id="CHEBI:30616"/>
        <dbReference type="ChEBI" id="CHEBI:43176"/>
        <dbReference type="ChEBI" id="CHEBI:68546"/>
        <dbReference type="ChEBI" id="CHEBI:456216"/>
        <dbReference type="EC" id="2.7.11.23"/>
    </reaction>
</comment>
<comment type="activity regulation">
    <text>Phosphorylation at Thr-176 is required for enzymatic activity.</text>
</comment>
<comment type="subunit">
    <text>Probably associates with cyclin-H (ccnh) and mat1 to form a multimeric active enzyme.</text>
</comment>
<comment type="subcellular location">
    <subcellularLocation>
        <location>Nucleus</location>
    </subcellularLocation>
    <text>In the prominent nucleus of oocytes.</text>
</comment>
<comment type="developmental stage">
    <text>Expressed only in non-mature oocytes.</text>
</comment>
<comment type="PTM">
    <text evidence="1">Phosphorylation of Ser-170 during mitosis inactivates the enzyme. Phosphorylation of Thr-176 is required for activity. Phosphorylated at Ser-170 and Thr-176 by CDK2 (By similarity).</text>
</comment>
<comment type="similarity">
    <text evidence="6">Belongs to the protein kinase superfamily. CMGC Ser/Thr protein kinase family. CDC2/CDKX subfamily.</text>
</comment>
<protein>
    <recommendedName>
        <fullName>Cyclin-dependent kinase 7</fullName>
        <ecNumber>2.7.11.22</ecNumber>
        <ecNumber>2.7.11.23</ecNumber>
    </recommendedName>
    <alternativeName>
        <fullName>40 kDa protein kinase</fullName>
    </alternativeName>
    <alternativeName>
        <fullName>CDC2/CDK2,4-activating kinase</fullName>
    </alternativeName>
    <alternativeName>
        <fullName>Cell division protein kinase 7</fullName>
    </alternativeName>
    <alternativeName>
        <fullName>P40 MO15</fullName>
    </alternativeName>
</protein>
<accession>P20911</accession>
<accession>A2BDA1</accession>
<keyword id="KW-0067">ATP-binding</keyword>
<keyword id="KW-0131">Cell cycle</keyword>
<keyword id="KW-0132">Cell division</keyword>
<keyword id="KW-0418">Kinase</keyword>
<keyword id="KW-0469">Meiosis</keyword>
<keyword id="KW-0547">Nucleotide-binding</keyword>
<keyword id="KW-0539">Nucleus</keyword>
<keyword id="KW-0597">Phosphoprotein</keyword>
<keyword id="KW-1185">Reference proteome</keyword>
<keyword id="KW-0723">Serine/threonine-protein kinase</keyword>
<keyword id="KW-0808">Transferase</keyword>
<sequence>MEGIAARGVDVRSRAKQYEKLDFLGEGQFATVYKARDKNTDRIVAIKKIKLGHRAEANDGINRTALREIKLLQELSHPNIIGLLDAFGHKSNISLVFDFMETDLEVIIKDTSLVLTPAHIKSYMLMTLQGLEYLHHLWILHRDLKPNNLLLDENGVLKLADFGLAKSFGSPNRIYTHQVVTRWYRSPELLFGARMYGVGVDMWAVGCILAELLLRVPFLPGDSDLDQLTRIFETLGTPTEEQWPGMSSLPDYVAFKSFPGTPLHLIFIAAGDDLLELLQGLFTFNPCARCTASQALRKRYFSNRPAPTPGNLLPRPNCSIEALKEQQNLNLGIKRKRTEGMDQKDIAKKLSF</sequence>
<reference key="1">
    <citation type="journal article" date="1990" name="EMBO J.">
        <title>p40MO15, a cdc2-related protein kinase involved in negative regulation of meiotic maturation of Xenopus oocytes.</title>
        <authorList>
            <person name="Shuttleworth J."/>
            <person name="Godfrey R."/>
            <person name="Colman A."/>
        </authorList>
    </citation>
    <scope>NUCLEOTIDE SEQUENCE [MRNA]</scope>
    <source>
        <tissue>Oocyte</tissue>
    </source>
</reference>
<reference key="2">
    <citation type="submission" date="2006-12" db="EMBL/GenBank/DDBJ databases">
        <authorList>
            <consortium name="NIH - Xenopus Gene Collection (XGC) project"/>
        </authorList>
    </citation>
    <scope>NUCLEOTIDE SEQUENCE [LARGE SCALE MRNA]</scope>
    <source>
        <tissue>Embryo</tissue>
    </source>
</reference>
<reference key="3">
    <citation type="journal article" date="1994" name="EMBO J.">
        <title>p40MO15 associates with a p36 subunit and requires both nuclear translocation and Thr176 phosphorylation to generate cdk-activating kinase activity in Xenopus oocytes.</title>
        <authorList>
            <person name="Labbe J.-C."/>
            <person name="Martinez A.-M."/>
            <person name="Fesquet D."/>
            <person name="Capony J.-P."/>
            <person name="Darbon J.-M."/>
            <person name="Derancourt J."/>
            <person name="Devault A."/>
            <person name="Morin N."/>
            <person name="Cavadore J.-C."/>
            <person name="Doree M."/>
        </authorList>
    </citation>
    <scope>PHOSPHORYLATION AT SER-170 AND THR-176</scope>
    <scope>INTERACTION WITH CCNH</scope>
    <source>
        <tissue>Oocyte</tissue>
    </source>
</reference>
<name>CDK7_XENLA</name>
<evidence type="ECO:0000250" key="1"/>
<evidence type="ECO:0000250" key="2">
    <source>
        <dbReference type="UniProtKB" id="P50613"/>
    </source>
</evidence>
<evidence type="ECO:0000255" key="3">
    <source>
        <dbReference type="PROSITE-ProRule" id="PRU00159"/>
    </source>
</evidence>
<evidence type="ECO:0000255" key="4">
    <source>
        <dbReference type="PROSITE-ProRule" id="PRU10027"/>
    </source>
</evidence>
<evidence type="ECO:0000269" key="5">
    <source>
    </source>
</evidence>
<evidence type="ECO:0000305" key="6"/>
<organism>
    <name type="scientific">Xenopus laevis</name>
    <name type="common">African clawed frog</name>
    <dbReference type="NCBI Taxonomy" id="8355"/>
    <lineage>
        <taxon>Eukaryota</taxon>
        <taxon>Metazoa</taxon>
        <taxon>Chordata</taxon>
        <taxon>Craniata</taxon>
        <taxon>Vertebrata</taxon>
        <taxon>Euteleostomi</taxon>
        <taxon>Amphibia</taxon>
        <taxon>Batrachia</taxon>
        <taxon>Anura</taxon>
        <taxon>Pipoidea</taxon>
        <taxon>Pipidae</taxon>
        <taxon>Xenopodinae</taxon>
        <taxon>Xenopus</taxon>
        <taxon>Xenopus</taxon>
    </lineage>
</organism>
<proteinExistence type="evidence at protein level"/>